<name>Y1854_DICDI</name>
<sequence>MTMINSIINISLNKISKTHQINKFKNENNFYNNNLKCSDLDVDFRHQTIIGNIHLGNKGILAGIYYNI</sequence>
<organism>
    <name type="scientific">Dictyostelium discoideum</name>
    <name type="common">Social amoeba</name>
    <dbReference type="NCBI Taxonomy" id="44689"/>
    <lineage>
        <taxon>Eukaryota</taxon>
        <taxon>Amoebozoa</taxon>
        <taxon>Evosea</taxon>
        <taxon>Eumycetozoa</taxon>
        <taxon>Dictyostelia</taxon>
        <taxon>Dictyosteliales</taxon>
        <taxon>Dictyosteliaceae</taxon>
        <taxon>Dictyostelium</taxon>
    </lineage>
</organism>
<dbReference type="EMBL" id="AAFI02000200">
    <property type="protein sequence ID" value="EAL60827.1"/>
    <property type="molecule type" value="Genomic_DNA"/>
</dbReference>
<dbReference type="RefSeq" id="XP_629215.1">
    <property type="nucleotide sequence ID" value="XM_629213.1"/>
</dbReference>
<dbReference type="PaxDb" id="44689-DDB0191854"/>
<dbReference type="EnsemblProtists" id="EAL60827">
    <property type="protein sequence ID" value="EAL60827"/>
    <property type="gene ID" value="DDB_G0293256"/>
</dbReference>
<dbReference type="GeneID" id="8629094"/>
<dbReference type="KEGG" id="ddi:DDB_G0293256"/>
<dbReference type="dictyBase" id="DDB_G0293256"/>
<dbReference type="HOGENOM" id="CLU_2799327_0_0_1"/>
<dbReference type="InParanoid" id="Q54C51"/>
<dbReference type="PRO" id="PR:Q54C51"/>
<dbReference type="Proteomes" id="UP000002195">
    <property type="component" value="Chromosome 6"/>
</dbReference>
<proteinExistence type="predicted"/>
<reference key="1">
    <citation type="journal article" date="2005" name="Nature">
        <title>The genome of the social amoeba Dictyostelium discoideum.</title>
        <authorList>
            <person name="Eichinger L."/>
            <person name="Pachebat J.A."/>
            <person name="Gloeckner G."/>
            <person name="Rajandream M.A."/>
            <person name="Sucgang R."/>
            <person name="Berriman M."/>
            <person name="Song J."/>
            <person name="Olsen R."/>
            <person name="Szafranski K."/>
            <person name="Xu Q."/>
            <person name="Tunggal B."/>
            <person name="Kummerfeld S."/>
            <person name="Madera M."/>
            <person name="Konfortov B.A."/>
            <person name="Rivero F."/>
            <person name="Bankier A.T."/>
            <person name="Lehmann R."/>
            <person name="Hamlin N."/>
            <person name="Davies R."/>
            <person name="Gaudet P."/>
            <person name="Fey P."/>
            <person name="Pilcher K."/>
            <person name="Chen G."/>
            <person name="Saunders D."/>
            <person name="Sodergren E.J."/>
            <person name="Davis P."/>
            <person name="Kerhornou A."/>
            <person name="Nie X."/>
            <person name="Hall N."/>
            <person name="Anjard C."/>
            <person name="Hemphill L."/>
            <person name="Bason N."/>
            <person name="Farbrother P."/>
            <person name="Desany B."/>
            <person name="Just E."/>
            <person name="Morio T."/>
            <person name="Rost R."/>
            <person name="Churcher C.M."/>
            <person name="Cooper J."/>
            <person name="Haydock S."/>
            <person name="van Driessche N."/>
            <person name="Cronin A."/>
            <person name="Goodhead I."/>
            <person name="Muzny D.M."/>
            <person name="Mourier T."/>
            <person name="Pain A."/>
            <person name="Lu M."/>
            <person name="Harper D."/>
            <person name="Lindsay R."/>
            <person name="Hauser H."/>
            <person name="James K.D."/>
            <person name="Quiles M."/>
            <person name="Madan Babu M."/>
            <person name="Saito T."/>
            <person name="Buchrieser C."/>
            <person name="Wardroper A."/>
            <person name="Felder M."/>
            <person name="Thangavelu M."/>
            <person name="Johnson D."/>
            <person name="Knights A."/>
            <person name="Loulseged H."/>
            <person name="Mungall K.L."/>
            <person name="Oliver K."/>
            <person name="Price C."/>
            <person name="Quail M.A."/>
            <person name="Urushihara H."/>
            <person name="Hernandez J."/>
            <person name="Rabbinowitsch E."/>
            <person name="Steffen D."/>
            <person name="Sanders M."/>
            <person name="Ma J."/>
            <person name="Kohara Y."/>
            <person name="Sharp S."/>
            <person name="Simmonds M.N."/>
            <person name="Spiegler S."/>
            <person name="Tivey A."/>
            <person name="Sugano S."/>
            <person name="White B."/>
            <person name="Walker D."/>
            <person name="Woodward J.R."/>
            <person name="Winckler T."/>
            <person name="Tanaka Y."/>
            <person name="Shaulsky G."/>
            <person name="Schleicher M."/>
            <person name="Weinstock G.M."/>
            <person name="Rosenthal A."/>
            <person name="Cox E.C."/>
            <person name="Chisholm R.L."/>
            <person name="Gibbs R.A."/>
            <person name="Loomis W.F."/>
            <person name="Platzer M."/>
            <person name="Kay R.R."/>
            <person name="Williams J.G."/>
            <person name="Dear P.H."/>
            <person name="Noegel A.A."/>
            <person name="Barrell B.G."/>
            <person name="Kuspa A."/>
        </authorList>
    </citation>
    <scope>NUCLEOTIDE SEQUENCE [LARGE SCALE GENOMIC DNA]</scope>
    <source>
        <strain>AX4</strain>
    </source>
</reference>
<gene>
    <name type="ORF">DDB_G0293256</name>
</gene>
<accession>Q54C51</accession>
<protein>
    <recommendedName>
        <fullName>Putative uncharacterized protein DDB_G0293256</fullName>
    </recommendedName>
</protein>
<feature type="chain" id="PRO_0000344392" description="Putative uncharacterized protein DDB_G0293256">
    <location>
        <begin position="1"/>
        <end position="68"/>
    </location>
</feature>
<keyword id="KW-1185">Reference proteome</keyword>